<proteinExistence type="inferred from homology"/>
<comment type="function">
    <text evidence="1">Structural component of flagellum, the bacterial motility apparatus. Part of the rod structure of flagellar basal body (By similarity).</text>
</comment>
<comment type="subunit">
    <text evidence="1">The basal body constitutes a major portion of the flagellar organelle and consists of a number of rings mounted on a central rod. In Gram-negative bacteria, at least four rings, L, P, S and M are present, whereas Gram-positive bacteria lack the L and P rings. The rod consists of about 26 subunits of FlgG in the distal portion, and FlgB, FlgC and FlgF build up the proximal portion of the rod with about 6 subunits each. Rod assembly occurs by export via the flagellum-specific pathway of its constituent proteins and by their incorporation into the rod structure in the probable order of FlgB, FlgC, FlgF and FlgG. Another protein, FliE, also assembles onto the stable rod structure (By similarity).</text>
</comment>
<comment type="subcellular location">
    <subcellularLocation>
        <location evidence="1">Bacterial flagellum basal body</location>
    </subcellularLocation>
</comment>
<comment type="similarity">
    <text evidence="2">Belongs to the flagella basal body rod proteins family.</text>
</comment>
<comment type="sequence caution" evidence="2">
    <conflict type="erroneous initiation">
        <sequence resource="EMBL-CDS" id="AAK86367"/>
    </conflict>
    <text>Truncated N-terminus.</text>
</comment>
<sequence>MEKSMQPIQLFELASRQAEWLSVRQEVVATNIANANTPKFHAKDVSPFEAVMQATSQQVGMARTNPAHLGESTLSENIAVRDNPVNNEIGMQESGNSVGLAEEMTKTGEIKRQYDLNASLVKSFHRMMLMTVKR</sequence>
<dbReference type="EMBL" id="U39941">
    <property type="protein sequence ID" value="AAB68965.1"/>
    <property type="molecule type" value="Genomic_DNA"/>
</dbReference>
<dbReference type="EMBL" id="AE007869">
    <property type="protein sequence ID" value="AAK86367.2"/>
    <property type="status" value="ALT_INIT"/>
    <property type="molecule type" value="Genomic_DNA"/>
</dbReference>
<dbReference type="PIR" id="AF2644">
    <property type="entry name" value="AF2644"/>
</dbReference>
<dbReference type="PIR" id="F97426">
    <property type="entry name" value="F97426"/>
</dbReference>
<dbReference type="RefSeq" id="NP_353582.2">
    <property type="nucleotide sequence ID" value="NC_003062.2"/>
</dbReference>
<dbReference type="RefSeq" id="WP_006313020.1">
    <property type="nucleotide sequence ID" value="NC_003062.2"/>
</dbReference>
<dbReference type="SMR" id="Q44335"/>
<dbReference type="STRING" id="176299.Atu0555"/>
<dbReference type="EnsemblBacteria" id="AAK86367">
    <property type="protein sequence ID" value="AAK86367"/>
    <property type="gene ID" value="Atu0555"/>
</dbReference>
<dbReference type="GeneID" id="1132593"/>
<dbReference type="KEGG" id="atu:Atu0555"/>
<dbReference type="PATRIC" id="fig|176299.10.peg.551"/>
<dbReference type="eggNOG" id="COG1815">
    <property type="taxonomic scope" value="Bacteria"/>
</dbReference>
<dbReference type="HOGENOM" id="CLU_125463_2_0_5"/>
<dbReference type="OrthoDB" id="9788334at2"/>
<dbReference type="Proteomes" id="UP000000813">
    <property type="component" value="Chromosome circular"/>
</dbReference>
<dbReference type="GO" id="GO:0009425">
    <property type="term" value="C:bacterial-type flagellum basal body"/>
    <property type="evidence" value="ECO:0000303"/>
    <property type="project" value="PAMGO_GAT"/>
</dbReference>
<dbReference type="GO" id="GO:0030694">
    <property type="term" value="C:bacterial-type flagellum basal body, rod"/>
    <property type="evidence" value="ECO:0007669"/>
    <property type="project" value="InterPro"/>
</dbReference>
<dbReference type="GO" id="GO:0071973">
    <property type="term" value="P:bacterial-type flagellum-dependent cell motility"/>
    <property type="evidence" value="ECO:0007669"/>
    <property type="project" value="InterPro"/>
</dbReference>
<dbReference type="InterPro" id="IPR001444">
    <property type="entry name" value="Flag_bb_rod_N"/>
</dbReference>
<dbReference type="InterPro" id="IPR019776">
    <property type="entry name" value="Flagellar_basal_body_rod_CS"/>
</dbReference>
<dbReference type="InterPro" id="IPR006300">
    <property type="entry name" value="FlgB"/>
</dbReference>
<dbReference type="NCBIfam" id="TIGR01396">
    <property type="entry name" value="FlgB"/>
    <property type="match status" value="1"/>
</dbReference>
<dbReference type="NCBIfam" id="NF004653">
    <property type="entry name" value="PRK06003.1"/>
    <property type="match status" value="1"/>
</dbReference>
<dbReference type="Pfam" id="PF00460">
    <property type="entry name" value="Flg_bb_rod"/>
    <property type="match status" value="1"/>
</dbReference>
<dbReference type="PIRSF" id="PIRSF002889">
    <property type="entry name" value="Rod_FlgB"/>
    <property type="match status" value="1"/>
</dbReference>
<dbReference type="PROSITE" id="PS00588">
    <property type="entry name" value="FLAGELLA_BB_ROD"/>
    <property type="match status" value="1"/>
</dbReference>
<protein>
    <recommendedName>
        <fullName>Flagellar basal body rod protein FlgB</fullName>
    </recommendedName>
</protein>
<organism>
    <name type="scientific">Agrobacterium fabrum (strain C58 / ATCC 33970)</name>
    <name type="common">Agrobacterium tumefaciens (strain C58)</name>
    <dbReference type="NCBI Taxonomy" id="176299"/>
    <lineage>
        <taxon>Bacteria</taxon>
        <taxon>Pseudomonadati</taxon>
        <taxon>Pseudomonadota</taxon>
        <taxon>Alphaproteobacteria</taxon>
        <taxon>Hyphomicrobiales</taxon>
        <taxon>Rhizobiaceae</taxon>
        <taxon>Rhizobium/Agrobacterium group</taxon>
        <taxon>Agrobacterium</taxon>
        <taxon>Agrobacterium tumefaciens complex</taxon>
    </lineage>
</organism>
<reference key="1">
    <citation type="journal article" date="1997" name="Gene">
        <title>Isolation and characterisation of a linked cluster of genes from Agrobacterium tumefaciens encoding proteins involved in flagellar basal-body structure.</title>
        <authorList>
            <person name="Deakin W.J."/>
            <person name="Furniss C.S."/>
            <person name="Parker V.E."/>
            <person name="Shaw C.H."/>
        </authorList>
    </citation>
    <scope>NUCLEOTIDE SEQUENCE [GENOMIC DNA]</scope>
</reference>
<reference key="2">
    <citation type="journal article" date="2001" name="Science">
        <title>The genome of the natural genetic engineer Agrobacterium tumefaciens C58.</title>
        <authorList>
            <person name="Wood D.W."/>
            <person name="Setubal J.C."/>
            <person name="Kaul R."/>
            <person name="Monks D.E."/>
            <person name="Kitajima J.P."/>
            <person name="Okura V.K."/>
            <person name="Zhou Y."/>
            <person name="Chen L."/>
            <person name="Wood G.E."/>
            <person name="Almeida N.F. Jr."/>
            <person name="Woo L."/>
            <person name="Chen Y."/>
            <person name="Paulsen I.T."/>
            <person name="Eisen J.A."/>
            <person name="Karp P.D."/>
            <person name="Bovee D. Sr."/>
            <person name="Chapman P."/>
            <person name="Clendenning J."/>
            <person name="Deatherage G."/>
            <person name="Gillet W."/>
            <person name="Grant C."/>
            <person name="Kutyavin T."/>
            <person name="Levy R."/>
            <person name="Li M.-J."/>
            <person name="McClelland E."/>
            <person name="Palmieri A."/>
            <person name="Raymond C."/>
            <person name="Rouse G."/>
            <person name="Saenphimmachak C."/>
            <person name="Wu Z."/>
            <person name="Romero P."/>
            <person name="Gordon D."/>
            <person name="Zhang S."/>
            <person name="Yoo H."/>
            <person name="Tao Y."/>
            <person name="Biddle P."/>
            <person name="Jung M."/>
            <person name="Krespan W."/>
            <person name="Perry M."/>
            <person name="Gordon-Kamm B."/>
            <person name="Liao L."/>
            <person name="Kim S."/>
            <person name="Hendrick C."/>
            <person name="Zhao Z.-Y."/>
            <person name="Dolan M."/>
            <person name="Chumley F."/>
            <person name="Tingey S.V."/>
            <person name="Tomb J.-F."/>
            <person name="Gordon M.P."/>
            <person name="Olson M.V."/>
            <person name="Nester E.W."/>
        </authorList>
    </citation>
    <scope>NUCLEOTIDE SEQUENCE [LARGE SCALE GENOMIC DNA]</scope>
    <source>
        <strain>C58 / ATCC 33970</strain>
    </source>
</reference>
<reference key="3">
    <citation type="journal article" date="2001" name="Science">
        <title>Genome sequence of the plant pathogen and biotechnology agent Agrobacterium tumefaciens C58.</title>
        <authorList>
            <person name="Goodner B."/>
            <person name="Hinkle G."/>
            <person name="Gattung S."/>
            <person name="Miller N."/>
            <person name="Blanchard M."/>
            <person name="Qurollo B."/>
            <person name="Goldman B.S."/>
            <person name="Cao Y."/>
            <person name="Askenazi M."/>
            <person name="Halling C."/>
            <person name="Mullin L."/>
            <person name="Houmiel K."/>
            <person name="Gordon J."/>
            <person name="Vaudin M."/>
            <person name="Iartchouk O."/>
            <person name="Epp A."/>
            <person name="Liu F."/>
            <person name="Wollam C."/>
            <person name="Allinger M."/>
            <person name="Doughty D."/>
            <person name="Scott C."/>
            <person name="Lappas C."/>
            <person name="Markelz B."/>
            <person name="Flanagan C."/>
            <person name="Crowell C."/>
            <person name="Gurson J."/>
            <person name="Lomo C."/>
            <person name="Sear C."/>
            <person name="Strub G."/>
            <person name="Cielo C."/>
            <person name="Slater S."/>
        </authorList>
    </citation>
    <scope>NUCLEOTIDE SEQUENCE [LARGE SCALE GENOMIC DNA]</scope>
    <source>
        <strain>C58 / ATCC 33970</strain>
    </source>
</reference>
<name>FLGB_AGRFC</name>
<evidence type="ECO:0000250" key="1"/>
<evidence type="ECO:0000305" key="2"/>
<gene>
    <name type="primary">flgB</name>
    <name type="ordered locus">Atu0555</name>
    <name type="ORF">AGR_C_976</name>
</gene>
<keyword id="KW-0975">Bacterial flagellum</keyword>
<keyword id="KW-1185">Reference proteome</keyword>
<feature type="chain" id="PRO_0000180782" description="Flagellar basal body rod protein FlgB">
    <location>
        <begin position="1"/>
        <end position="134"/>
    </location>
</feature>
<feature type="sequence conflict" description="In Ref. 1; AAB68965." evidence="2" ref="1">
    <original>HLG</original>
    <variation>PPR</variation>
    <location>
        <begin position="68"/>
        <end position="70"/>
    </location>
</feature>
<accession>Q44335</accession>